<name>SURE_TRIV2</name>
<comment type="function">
    <text evidence="1">Nucleotidase that shows phosphatase activity on nucleoside 5'-monophosphates.</text>
</comment>
<comment type="catalytic activity">
    <reaction evidence="1">
        <text>a ribonucleoside 5'-phosphate + H2O = a ribonucleoside + phosphate</text>
        <dbReference type="Rhea" id="RHEA:12484"/>
        <dbReference type="ChEBI" id="CHEBI:15377"/>
        <dbReference type="ChEBI" id="CHEBI:18254"/>
        <dbReference type="ChEBI" id="CHEBI:43474"/>
        <dbReference type="ChEBI" id="CHEBI:58043"/>
        <dbReference type="EC" id="3.1.3.5"/>
    </reaction>
</comment>
<comment type="cofactor">
    <cofactor evidence="1">
        <name>a divalent metal cation</name>
        <dbReference type="ChEBI" id="CHEBI:60240"/>
    </cofactor>
    <text evidence="1">Binds 1 divalent metal cation per subunit.</text>
</comment>
<comment type="subcellular location">
    <subcellularLocation>
        <location evidence="1">Cytoplasm</location>
    </subcellularLocation>
</comment>
<comment type="similarity">
    <text evidence="1">Belongs to the SurE nucleotidase family.</text>
</comment>
<feature type="chain" id="PRO_0000235588" description="5'-nucleotidase SurE">
    <location>
        <begin position="1"/>
        <end position="265"/>
    </location>
</feature>
<feature type="binding site" evidence="1">
    <location>
        <position position="8"/>
    </location>
    <ligand>
        <name>a divalent metal cation</name>
        <dbReference type="ChEBI" id="CHEBI:60240"/>
    </ligand>
</feature>
<feature type="binding site" evidence="1">
    <location>
        <position position="9"/>
    </location>
    <ligand>
        <name>a divalent metal cation</name>
        <dbReference type="ChEBI" id="CHEBI:60240"/>
    </ligand>
</feature>
<feature type="binding site" evidence="1">
    <location>
        <position position="40"/>
    </location>
    <ligand>
        <name>a divalent metal cation</name>
        <dbReference type="ChEBI" id="CHEBI:60240"/>
    </ligand>
</feature>
<feature type="binding site" evidence="1">
    <location>
        <position position="98"/>
    </location>
    <ligand>
        <name>a divalent metal cation</name>
        <dbReference type="ChEBI" id="CHEBI:60240"/>
    </ligand>
</feature>
<dbReference type="EC" id="3.1.3.5" evidence="1"/>
<dbReference type="EMBL" id="CP000117">
    <property type="protein sequence ID" value="ABA21738.1"/>
    <property type="molecule type" value="Genomic_DNA"/>
</dbReference>
<dbReference type="SMR" id="Q3MB98"/>
<dbReference type="STRING" id="240292.Ava_2116"/>
<dbReference type="KEGG" id="ava:Ava_2116"/>
<dbReference type="eggNOG" id="COG0496">
    <property type="taxonomic scope" value="Bacteria"/>
</dbReference>
<dbReference type="HOGENOM" id="CLU_045192_1_3_3"/>
<dbReference type="Proteomes" id="UP000002533">
    <property type="component" value="Chromosome"/>
</dbReference>
<dbReference type="GO" id="GO:0005737">
    <property type="term" value="C:cytoplasm"/>
    <property type="evidence" value="ECO:0007669"/>
    <property type="project" value="UniProtKB-SubCell"/>
</dbReference>
<dbReference type="GO" id="GO:0008254">
    <property type="term" value="F:3'-nucleotidase activity"/>
    <property type="evidence" value="ECO:0007669"/>
    <property type="project" value="TreeGrafter"/>
</dbReference>
<dbReference type="GO" id="GO:0008253">
    <property type="term" value="F:5'-nucleotidase activity"/>
    <property type="evidence" value="ECO:0007669"/>
    <property type="project" value="UniProtKB-UniRule"/>
</dbReference>
<dbReference type="GO" id="GO:0004309">
    <property type="term" value="F:exopolyphosphatase activity"/>
    <property type="evidence" value="ECO:0007669"/>
    <property type="project" value="TreeGrafter"/>
</dbReference>
<dbReference type="GO" id="GO:0046872">
    <property type="term" value="F:metal ion binding"/>
    <property type="evidence" value="ECO:0007669"/>
    <property type="project" value="UniProtKB-UniRule"/>
</dbReference>
<dbReference type="GO" id="GO:0000166">
    <property type="term" value="F:nucleotide binding"/>
    <property type="evidence" value="ECO:0007669"/>
    <property type="project" value="UniProtKB-KW"/>
</dbReference>
<dbReference type="FunFam" id="3.40.1210.10:FF:000001">
    <property type="entry name" value="5'/3'-nucleotidase SurE"/>
    <property type="match status" value="1"/>
</dbReference>
<dbReference type="Gene3D" id="3.40.1210.10">
    <property type="entry name" value="Survival protein SurE-like phosphatase/nucleotidase"/>
    <property type="match status" value="1"/>
</dbReference>
<dbReference type="HAMAP" id="MF_00060">
    <property type="entry name" value="SurE"/>
    <property type="match status" value="1"/>
</dbReference>
<dbReference type="InterPro" id="IPR030048">
    <property type="entry name" value="SurE"/>
</dbReference>
<dbReference type="InterPro" id="IPR002828">
    <property type="entry name" value="SurE-like_Pase/nucleotidase"/>
</dbReference>
<dbReference type="InterPro" id="IPR036523">
    <property type="entry name" value="SurE-like_sf"/>
</dbReference>
<dbReference type="NCBIfam" id="NF001490">
    <property type="entry name" value="PRK00346.1-4"/>
    <property type="match status" value="1"/>
</dbReference>
<dbReference type="NCBIfam" id="NF001492">
    <property type="entry name" value="PRK00346.2-2"/>
    <property type="match status" value="1"/>
</dbReference>
<dbReference type="NCBIfam" id="TIGR00087">
    <property type="entry name" value="surE"/>
    <property type="match status" value="1"/>
</dbReference>
<dbReference type="PANTHER" id="PTHR30457">
    <property type="entry name" value="5'-NUCLEOTIDASE SURE"/>
    <property type="match status" value="1"/>
</dbReference>
<dbReference type="PANTHER" id="PTHR30457:SF12">
    <property type="entry name" value="5'_3'-NUCLEOTIDASE SURE"/>
    <property type="match status" value="1"/>
</dbReference>
<dbReference type="Pfam" id="PF01975">
    <property type="entry name" value="SurE"/>
    <property type="match status" value="1"/>
</dbReference>
<dbReference type="SUPFAM" id="SSF64167">
    <property type="entry name" value="SurE-like"/>
    <property type="match status" value="1"/>
</dbReference>
<accession>Q3MB98</accession>
<organism>
    <name type="scientific">Trichormus variabilis (strain ATCC 29413 / PCC 7937)</name>
    <name type="common">Anabaena variabilis</name>
    <dbReference type="NCBI Taxonomy" id="240292"/>
    <lineage>
        <taxon>Bacteria</taxon>
        <taxon>Bacillati</taxon>
        <taxon>Cyanobacteriota</taxon>
        <taxon>Cyanophyceae</taxon>
        <taxon>Nostocales</taxon>
        <taxon>Nostocaceae</taxon>
        <taxon>Trichormus</taxon>
    </lineage>
</organism>
<sequence>MKLLISNDDGISALGIRTLANALAEVGHDVTVVCPDRERSATGHGLTLHQPIRAEIVESIFHPAIKAWACDGTPSDCVKLALWALLDSPPDLVLSGINQGANLGTEILYSGTVSAAMEGMIEGIPSIAFSLTSHISRNFQPAAKFATILVEQLAAKPIPDLMLLNVNIPPVEWEEIAGVKLTRQGVRRYVDVFDKRTDPRGKTYYWLTGEVLEEVEPPEGLNLPQNVPIDVHAVKDNYISITPLQYNLTYATALDKLSNWNFPMS</sequence>
<gene>
    <name evidence="1" type="primary">surE</name>
    <name type="ordered locus">Ava_2116</name>
</gene>
<keyword id="KW-0963">Cytoplasm</keyword>
<keyword id="KW-0378">Hydrolase</keyword>
<keyword id="KW-0479">Metal-binding</keyword>
<keyword id="KW-0547">Nucleotide-binding</keyword>
<proteinExistence type="inferred from homology"/>
<protein>
    <recommendedName>
        <fullName evidence="1">5'-nucleotidase SurE</fullName>
        <ecNumber evidence="1">3.1.3.5</ecNumber>
    </recommendedName>
    <alternativeName>
        <fullName evidence="1">Nucleoside 5'-monophosphate phosphohydrolase</fullName>
    </alternativeName>
</protein>
<reference key="1">
    <citation type="journal article" date="2014" name="Stand. Genomic Sci.">
        <title>Complete genome sequence of Anabaena variabilis ATCC 29413.</title>
        <authorList>
            <person name="Thiel T."/>
            <person name="Pratte B.S."/>
            <person name="Zhong J."/>
            <person name="Goodwin L."/>
            <person name="Copeland A."/>
            <person name="Lucas S."/>
            <person name="Han C."/>
            <person name="Pitluck S."/>
            <person name="Land M.L."/>
            <person name="Kyrpides N.C."/>
            <person name="Woyke T."/>
        </authorList>
    </citation>
    <scope>NUCLEOTIDE SEQUENCE [LARGE SCALE GENOMIC DNA]</scope>
    <source>
        <strain>ATCC 29413 / PCC 7937</strain>
    </source>
</reference>
<evidence type="ECO:0000255" key="1">
    <source>
        <dbReference type="HAMAP-Rule" id="MF_00060"/>
    </source>
</evidence>